<feature type="chain" id="PRO_0000372039" description="GTP cyclohydrolase FolE2">
    <location>
        <begin position="1"/>
        <end position="298"/>
    </location>
</feature>
<feature type="site" description="May be catalytically important" evidence="1">
    <location>
        <position position="155"/>
    </location>
</feature>
<comment type="function">
    <text evidence="1">Converts GTP to 7,8-dihydroneopterin triphosphate.</text>
</comment>
<comment type="catalytic activity">
    <reaction evidence="1">
        <text>GTP + H2O = 7,8-dihydroneopterin 3'-triphosphate + formate + H(+)</text>
        <dbReference type="Rhea" id="RHEA:17473"/>
        <dbReference type="ChEBI" id="CHEBI:15377"/>
        <dbReference type="ChEBI" id="CHEBI:15378"/>
        <dbReference type="ChEBI" id="CHEBI:15740"/>
        <dbReference type="ChEBI" id="CHEBI:37565"/>
        <dbReference type="ChEBI" id="CHEBI:58462"/>
        <dbReference type="EC" id="3.5.4.16"/>
    </reaction>
</comment>
<comment type="pathway">
    <text evidence="1">Cofactor biosynthesis; 7,8-dihydroneopterin triphosphate biosynthesis; 7,8-dihydroneopterin triphosphate from GTP: step 1/1.</text>
</comment>
<comment type="similarity">
    <text evidence="1">Belongs to the GTP cyclohydrolase IV family.</text>
</comment>
<comment type="sequence caution" evidence="2">
    <conflict type="erroneous initiation">
        <sequence resource="EMBL-CDS" id="ACB92263"/>
    </conflict>
</comment>
<dbReference type="EC" id="3.5.4.16" evidence="1"/>
<dbReference type="EMBL" id="CP001011">
    <property type="protein sequence ID" value="ACB92263.1"/>
    <property type="status" value="ALT_INIT"/>
    <property type="molecule type" value="Genomic_DNA"/>
</dbReference>
<dbReference type="SMR" id="B2IAI3"/>
<dbReference type="KEGG" id="xfn:XfasM23_0825"/>
<dbReference type="HOGENOM" id="CLU_062816_0_0_6"/>
<dbReference type="UniPathway" id="UPA00848">
    <property type="reaction ID" value="UER00151"/>
</dbReference>
<dbReference type="Proteomes" id="UP000001698">
    <property type="component" value="Chromosome"/>
</dbReference>
<dbReference type="GO" id="GO:0003934">
    <property type="term" value="F:GTP cyclohydrolase I activity"/>
    <property type="evidence" value="ECO:0007669"/>
    <property type="project" value="UniProtKB-UniRule"/>
</dbReference>
<dbReference type="GO" id="GO:0046654">
    <property type="term" value="P:tetrahydrofolate biosynthetic process"/>
    <property type="evidence" value="ECO:0007669"/>
    <property type="project" value="UniProtKB-UniRule"/>
</dbReference>
<dbReference type="Gene3D" id="3.10.270.10">
    <property type="entry name" value="Urate Oxidase"/>
    <property type="match status" value="1"/>
</dbReference>
<dbReference type="HAMAP" id="MF_01527_B">
    <property type="entry name" value="GTP_cyclohydrol_B"/>
    <property type="match status" value="1"/>
</dbReference>
<dbReference type="InterPro" id="IPR022838">
    <property type="entry name" value="GTP_cyclohydrolase_FolE2"/>
</dbReference>
<dbReference type="InterPro" id="IPR003801">
    <property type="entry name" value="GTP_cyclohydrolase_FolE2/MptA"/>
</dbReference>
<dbReference type="NCBIfam" id="NF010200">
    <property type="entry name" value="PRK13674.1-1"/>
    <property type="match status" value="1"/>
</dbReference>
<dbReference type="PANTHER" id="PTHR36445">
    <property type="entry name" value="GTP CYCLOHYDROLASE MPTA"/>
    <property type="match status" value="1"/>
</dbReference>
<dbReference type="PANTHER" id="PTHR36445:SF1">
    <property type="entry name" value="GTP CYCLOHYDROLASE MPTA"/>
    <property type="match status" value="1"/>
</dbReference>
<dbReference type="Pfam" id="PF02649">
    <property type="entry name" value="GCHY-1"/>
    <property type="match status" value="1"/>
</dbReference>
<protein>
    <recommendedName>
        <fullName evidence="1">GTP cyclohydrolase FolE2</fullName>
        <ecNumber evidence="1">3.5.4.16</ecNumber>
    </recommendedName>
</protein>
<evidence type="ECO:0000255" key="1">
    <source>
        <dbReference type="HAMAP-Rule" id="MF_01527"/>
    </source>
</evidence>
<evidence type="ECO:0000305" key="2"/>
<keyword id="KW-0378">Hydrolase</keyword>
<gene>
    <name evidence="1" type="primary">folE2</name>
    <name type="ordered locus">XfasM23_0825</name>
</gene>
<organism>
    <name type="scientific">Xylella fastidiosa (strain M23)</name>
    <dbReference type="NCBI Taxonomy" id="405441"/>
    <lineage>
        <taxon>Bacteria</taxon>
        <taxon>Pseudomonadati</taxon>
        <taxon>Pseudomonadota</taxon>
        <taxon>Gammaproteobacteria</taxon>
        <taxon>Lysobacterales</taxon>
        <taxon>Lysobacteraceae</taxon>
        <taxon>Xylella</taxon>
    </lineage>
</organism>
<sequence>MSTSIPDVAVHDSPAIAAPLRWVGMDGIVVPVQLTTADGGQHVIGRARAQIDLPAMGVKGIHMSRLYRLLDTYAVEPLTPVGICGLLSAMVNSHADCASTAARVDWYFDWLRRVPALVSNDLSGWRGYPVWLRAEYSAGHVQFWLCVEVAYSSTCPCSAALARQMLADAFLQEHVEVSALSPETVADWLRSNGSYATPHSQRSLARIEVALTEQAVELGLPALVDCAERILSTPVQAAVRRVDEQAFARLNGANLMYVEDATRRLQHGLAIHYSAFRVHVRHLESLHPNDAVASTADE</sequence>
<reference key="1">
    <citation type="journal article" date="2010" name="J. Bacteriol.">
        <title>Whole genome sequences of two Xylella fastidiosa strains (M12 and M23) causing almond leaf scorch disease in California.</title>
        <authorList>
            <person name="Chen J."/>
            <person name="Xie G."/>
            <person name="Han S."/>
            <person name="Chertkov O."/>
            <person name="Sims D."/>
            <person name="Civerolo E.L."/>
        </authorList>
    </citation>
    <scope>NUCLEOTIDE SEQUENCE [LARGE SCALE GENOMIC DNA]</scope>
    <source>
        <strain>M23</strain>
    </source>
</reference>
<accession>B2IAI3</accession>
<proteinExistence type="inferred from homology"/>
<name>GCH4_XYLF2</name>